<feature type="chain" id="PRO_0000393356" description="Ribonucleoside-diphosphate reductase subunit beta nrdF2">
    <location>
        <begin position="1"/>
        <end position="324"/>
    </location>
</feature>
<feature type="active site">
    <location>
        <position position="110"/>
    </location>
</feature>
<feature type="binding site">
    <location>
        <position position="103"/>
    </location>
    <ligand>
        <name>Fe cation</name>
        <dbReference type="ChEBI" id="CHEBI:24875"/>
        <label>1</label>
    </ligand>
</feature>
<feature type="binding site">
    <location>
        <position position="103"/>
    </location>
    <ligand>
        <name>Fe cation</name>
        <dbReference type="ChEBI" id="CHEBI:24875"/>
        <label>2</label>
    </ligand>
</feature>
<feature type="binding site">
    <location>
        <position position="106"/>
    </location>
    <ligand>
        <name>Fe cation</name>
        <dbReference type="ChEBI" id="CHEBI:24875"/>
        <label>1</label>
    </ligand>
</feature>
<feature type="binding site">
    <location>
        <position position="163"/>
    </location>
    <ligand>
        <name>Fe cation</name>
        <dbReference type="ChEBI" id="CHEBI:24875"/>
        <label>2</label>
    </ligand>
</feature>
<feature type="binding site">
    <location>
        <position position="197"/>
    </location>
    <ligand>
        <name>Fe cation</name>
        <dbReference type="ChEBI" id="CHEBI:24875"/>
        <label>1</label>
    </ligand>
</feature>
<feature type="binding site">
    <location>
        <position position="197"/>
    </location>
    <ligand>
        <name>Fe cation</name>
        <dbReference type="ChEBI" id="CHEBI:24875"/>
        <label>2</label>
    </ligand>
</feature>
<feature type="binding site">
    <location>
        <position position="200"/>
    </location>
    <ligand>
        <name>Fe cation</name>
        <dbReference type="ChEBI" id="CHEBI:24875"/>
        <label>2</label>
    </ligand>
</feature>
<feature type="helix" evidence="5">
    <location>
        <begin position="23"/>
        <end position="33"/>
    </location>
</feature>
<feature type="helix" evidence="5">
    <location>
        <begin position="38"/>
        <end position="40"/>
    </location>
</feature>
<feature type="helix" evidence="5">
    <location>
        <begin position="43"/>
        <end position="46"/>
    </location>
</feature>
<feature type="helix" evidence="5">
    <location>
        <begin position="47"/>
        <end position="51"/>
    </location>
</feature>
<feature type="helix" evidence="5">
    <location>
        <begin position="55"/>
        <end position="77"/>
    </location>
</feature>
<feature type="helix" evidence="5">
    <location>
        <begin position="79"/>
        <end position="82"/>
    </location>
</feature>
<feature type="helix" evidence="5">
    <location>
        <begin position="84"/>
        <end position="86"/>
    </location>
</feature>
<feature type="helix" evidence="5">
    <location>
        <begin position="90"/>
        <end position="117"/>
    </location>
</feature>
<feature type="helix" evidence="5">
    <location>
        <begin position="120"/>
        <end position="132"/>
    </location>
</feature>
<feature type="helix" evidence="5">
    <location>
        <begin position="134"/>
        <end position="147"/>
    </location>
</feature>
<feature type="strand" evidence="6">
    <location>
        <begin position="148"/>
        <end position="150"/>
    </location>
</feature>
<feature type="helix" evidence="5">
    <location>
        <begin position="152"/>
        <end position="164"/>
    </location>
</feature>
<feature type="helix" evidence="5">
    <location>
        <begin position="166"/>
        <end position="170"/>
    </location>
</feature>
<feature type="helix" evidence="5">
    <location>
        <begin position="172"/>
        <end position="179"/>
    </location>
</feature>
<feature type="helix" evidence="5">
    <location>
        <begin position="184"/>
        <end position="212"/>
    </location>
</feature>
<feature type="helix" evidence="5">
    <location>
        <begin position="217"/>
        <end position="246"/>
    </location>
</feature>
<feature type="turn" evidence="5">
    <location>
        <begin position="247"/>
        <end position="250"/>
    </location>
</feature>
<feature type="helix" evidence="5">
    <location>
        <begin position="252"/>
        <end position="269"/>
    </location>
</feature>
<feature type="helix" evidence="5">
    <location>
        <begin position="278"/>
        <end position="280"/>
    </location>
</feature>
<feature type="helix" evidence="5">
    <location>
        <begin position="285"/>
        <end position="290"/>
    </location>
</feature>
<name>RIR2B_MYCTU</name>
<reference key="1">
    <citation type="journal article" date="1997" name="J. Bacteriol.">
        <title>Characterization of two genes encoding the Mycobacterium tuberculosis ribonucleotide reductase small subunit.</title>
        <authorList>
            <person name="Yang F."/>
            <person name="Curran S.C."/>
            <person name="Li L.S."/>
            <person name="Avarbock D."/>
            <person name="Graf J.D."/>
            <person name="Chua M.M."/>
            <person name="Lu G."/>
            <person name="Salem J."/>
            <person name="Rubin H."/>
        </authorList>
    </citation>
    <scope>NUCLEOTIDE SEQUENCE [GENOMIC DNA]</scope>
    <scope>CATALYTIC ACTIVITY</scope>
    <scope>TYROSYL ACTIVE SITE</scope>
    <scope>ACTIVITY REGULATION</scope>
    <scope>FUNCTION IN E.COLI</scope>
    <source>
        <strain>ATCC 35801 / TMC 107 / Erdman</strain>
    </source>
</reference>
<reference key="2">
    <citation type="journal article" date="1998" name="Nature">
        <title>Deciphering the biology of Mycobacterium tuberculosis from the complete genome sequence.</title>
        <authorList>
            <person name="Cole S.T."/>
            <person name="Brosch R."/>
            <person name="Parkhill J."/>
            <person name="Garnier T."/>
            <person name="Churcher C.M."/>
            <person name="Harris D.E."/>
            <person name="Gordon S.V."/>
            <person name="Eiglmeier K."/>
            <person name="Gas S."/>
            <person name="Barry C.E. III"/>
            <person name="Tekaia F."/>
            <person name="Badcock K."/>
            <person name="Basham D."/>
            <person name="Brown D."/>
            <person name="Chillingworth T."/>
            <person name="Connor R."/>
            <person name="Davies R.M."/>
            <person name="Devlin K."/>
            <person name="Feltwell T."/>
            <person name="Gentles S."/>
            <person name="Hamlin N."/>
            <person name="Holroyd S."/>
            <person name="Hornsby T."/>
            <person name="Jagels K."/>
            <person name="Krogh A."/>
            <person name="McLean J."/>
            <person name="Moule S."/>
            <person name="Murphy L.D."/>
            <person name="Oliver S."/>
            <person name="Osborne J."/>
            <person name="Quail M.A."/>
            <person name="Rajandream M.A."/>
            <person name="Rogers J."/>
            <person name="Rutter S."/>
            <person name="Seeger K."/>
            <person name="Skelton S."/>
            <person name="Squares S."/>
            <person name="Squares R."/>
            <person name="Sulston J.E."/>
            <person name="Taylor K."/>
            <person name="Whitehead S."/>
            <person name="Barrell B.G."/>
        </authorList>
    </citation>
    <scope>NUCLEOTIDE SEQUENCE [LARGE SCALE GENOMIC DNA]</scope>
    <source>
        <strain>ATCC 25618 / H37Rv</strain>
    </source>
</reference>
<reference key="3">
    <citation type="journal article" date="2003" name="Infect. Immun.">
        <title>Ribonucleotide reduction in Mycobacterium tuberculosis: function and expression of genes encoding class Ib and class II ribonucleotide reductases.</title>
        <authorList>
            <person name="Dawes S.S."/>
            <person name="Warner D.F."/>
            <person name="Tsenova L."/>
            <person name="Timm J."/>
            <person name="McKinney J.D."/>
            <person name="Kaplan G."/>
            <person name="Rubin H."/>
            <person name="Mizrahi V."/>
        </authorList>
    </citation>
    <scope>INDUCTION</scope>
    <scope>DISRUPTION PHENOTYPE</scope>
    <source>
        <strain>ATCC 25618 / H37Rv</strain>
    </source>
</reference>
<reference key="4">
    <citation type="journal article" date="2011" name="Mol. Cell. Proteomics">
        <title>Proteogenomic analysis of Mycobacterium tuberculosis by high resolution mass spectrometry.</title>
        <authorList>
            <person name="Kelkar D.S."/>
            <person name="Kumar D."/>
            <person name="Kumar P."/>
            <person name="Balakrishnan L."/>
            <person name="Muthusamy B."/>
            <person name="Yadav A.K."/>
            <person name="Shrivastava P."/>
            <person name="Marimuthu A."/>
            <person name="Anand S."/>
            <person name="Sundaram H."/>
            <person name="Kingsbury R."/>
            <person name="Harsha H.C."/>
            <person name="Nair B."/>
            <person name="Prasad T.S."/>
            <person name="Chauhan D.S."/>
            <person name="Katoch K."/>
            <person name="Katoch V.M."/>
            <person name="Kumar P."/>
            <person name="Chaerkady R."/>
            <person name="Ramachandran S."/>
            <person name="Dash D."/>
            <person name="Pandey A."/>
        </authorList>
    </citation>
    <scope>IDENTIFICATION BY MASS SPECTROMETRY [LARGE SCALE ANALYSIS]</scope>
    <source>
        <strain>ATCC 25618 / H37Rv</strain>
    </source>
</reference>
<reference key="5">
    <citation type="journal article" date="2004" name="FEBS Lett.">
        <title>Crystal structure of the biologically active form of class Ib ribonucleotide reductase small subunit from Mycobacterium tuberculosis.</title>
        <authorList>
            <person name="Uppsten M."/>
            <person name="Davis J."/>
            <person name="Rubin H."/>
            <person name="Uhlin U."/>
        </authorList>
    </citation>
    <scope>X-RAY CRYSTALLOGRAPHY (2.2 ANGSTROMS) OF 1-296 WITH REDUCED IRON COFACTOR</scope>
    <scope>TYROSYL ACTIVE SITE</scope>
</reference>
<accession>P9WH71</accession>
<accession>L0TBM8</accession>
<accession>Q50549</accession>
<accession>Q6MX16</accession>
<accession>Q7D680</accession>
<organism>
    <name type="scientific">Mycobacterium tuberculosis (strain ATCC 25618 / H37Rv)</name>
    <dbReference type="NCBI Taxonomy" id="83332"/>
    <lineage>
        <taxon>Bacteria</taxon>
        <taxon>Bacillati</taxon>
        <taxon>Actinomycetota</taxon>
        <taxon>Actinomycetes</taxon>
        <taxon>Mycobacteriales</taxon>
        <taxon>Mycobacteriaceae</taxon>
        <taxon>Mycobacterium</taxon>
        <taxon>Mycobacterium tuberculosis complex</taxon>
    </lineage>
</organism>
<comment type="function">
    <text evidence="3">Provides the precursors necessary for DNA synthesis. Catalyzes the biosynthesis of deoxyribonucleotides from the corresponding ribonucleotides. Two genes for this protein are present in M.tuberculosis; this is the active form. When coexpressed in E.coli with nrdE the 2 proteins complement a temperature-sensitive E.coli mutant.</text>
</comment>
<comment type="catalytic activity">
    <reaction evidence="1 3">
        <text>a 2'-deoxyribonucleoside 5'-diphosphate + [thioredoxin]-disulfide + H2O = a ribonucleoside 5'-diphosphate + [thioredoxin]-dithiol</text>
        <dbReference type="Rhea" id="RHEA:23252"/>
        <dbReference type="Rhea" id="RHEA-COMP:10698"/>
        <dbReference type="Rhea" id="RHEA-COMP:10700"/>
        <dbReference type="ChEBI" id="CHEBI:15377"/>
        <dbReference type="ChEBI" id="CHEBI:29950"/>
        <dbReference type="ChEBI" id="CHEBI:50058"/>
        <dbReference type="ChEBI" id="CHEBI:57930"/>
        <dbReference type="ChEBI" id="CHEBI:73316"/>
        <dbReference type="EC" id="1.17.4.1"/>
    </reaction>
</comment>
<comment type="cofactor">
    <cofactor>
        <name>Fe cation</name>
        <dbReference type="ChEBI" id="CHEBI:24875"/>
    </cofactor>
    <text>Binds 2 iron ions per subunit.</text>
</comment>
<comment type="activity regulation">
    <text evidence="3">CDP reduction is stimulated by dATP.</text>
</comment>
<comment type="subunit">
    <text evidence="4">Tetramer of two alpha and two beta subunits.</text>
</comment>
<comment type="induction">
    <text evidence="2">Initially decreases as oxygen levels drop, then rises again.</text>
</comment>
<comment type="disruption phenotype">
    <text evidence="2">Lethality.</text>
</comment>
<comment type="similarity">
    <text evidence="4">Belongs to the ribonucleoside diphosphate reductase small chain family.</text>
</comment>
<keyword id="KW-0002">3D-structure</keyword>
<keyword id="KW-0215">Deoxyribonucleotide synthesis</keyword>
<keyword id="KW-0408">Iron</keyword>
<keyword id="KW-0479">Metal-binding</keyword>
<keyword id="KW-0560">Oxidoreductase</keyword>
<keyword id="KW-1185">Reference proteome</keyword>
<dbReference type="EC" id="1.17.4.1"/>
<dbReference type="EMBL" id="U41100">
    <property type="protein sequence ID" value="AAB81406.1"/>
    <property type="molecule type" value="Genomic_DNA"/>
</dbReference>
<dbReference type="EMBL" id="AL123456">
    <property type="protein sequence ID" value="CCP45857.1"/>
    <property type="molecule type" value="Genomic_DNA"/>
</dbReference>
<dbReference type="PIR" id="C70861">
    <property type="entry name" value="C70861"/>
</dbReference>
<dbReference type="RefSeq" id="YP_177921.1">
    <property type="nucleotide sequence ID" value="NC_000962.3"/>
</dbReference>
<dbReference type="PDB" id="1UZR">
    <property type="method" value="X-ray"/>
    <property type="resolution" value="2.20 A"/>
    <property type="chains" value="A/B/C=1-296"/>
</dbReference>
<dbReference type="PDB" id="8J4X">
    <property type="method" value="X-ray"/>
    <property type="resolution" value="3.04 A"/>
    <property type="chains" value="A/B/C/D/E/F=2-324"/>
</dbReference>
<dbReference type="PDB" id="8J4Y">
    <property type="method" value="X-ray"/>
    <property type="resolution" value="3.02 A"/>
    <property type="chains" value="A/B/C/D/E/F=2-324"/>
</dbReference>
<dbReference type="PDBsum" id="1UZR"/>
<dbReference type="PDBsum" id="8J4X"/>
<dbReference type="PDBsum" id="8J4Y"/>
<dbReference type="SMR" id="P9WH71"/>
<dbReference type="FunCoup" id="P9WH71">
    <property type="interactions" value="107"/>
</dbReference>
<dbReference type="STRING" id="83332.Rv3048c"/>
<dbReference type="PaxDb" id="83332-Rv3048c"/>
<dbReference type="DNASU" id="888886"/>
<dbReference type="GeneID" id="888886"/>
<dbReference type="KEGG" id="mtu:Rv3048c"/>
<dbReference type="KEGG" id="mtv:RVBD_3048c"/>
<dbReference type="TubercuList" id="Rv3048c"/>
<dbReference type="eggNOG" id="COG0208">
    <property type="taxonomic scope" value="Bacteria"/>
</dbReference>
<dbReference type="InParanoid" id="P9WH71"/>
<dbReference type="OrthoDB" id="9766544at2"/>
<dbReference type="PhylomeDB" id="P9WH71"/>
<dbReference type="BRENDA" id="1.17.4.1">
    <property type="organism ID" value="3445"/>
</dbReference>
<dbReference type="EvolutionaryTrace" id="P9WH71"/>
<dbReference type="Proteomes" id="UP000001584">
    <property type="component" value="Chromosome"/>
</dbReference>
<dbReference type="GO" id="GO:0005971">
    <property type="term" value="C:ribonucleoside-diphosphate reductase complex"/>
    <property type="evidence" value="ECO:0000314"/>
    <property type="project" value="MTBBASE"/>
</dbReference>
<dbReference type="GO" id="GO:0046872">
    <property type="term" value="F:metal ion binding"/>
    <property type="evidence" value="ECO:0007669"/>
    <property type="project" value="UniProtKB-KW"/>
</dbReference>
<dbReference type="GO" id="GO:0004748">
    <property type="term" value="F:ribonucleoside-diphosphate reductase activity, thioredoxin disulfide as acceptor"/>
    <property type="evidence" value="ECO:0007669"/>
    <property type="project" value="UniProtKB-EC"/>
</dbReference>
<dbReference type="GO" id="GO:0009263">
    <property type="term" value="P:deoxyribonucleotide biosynthetic process"/>
    <property type="evidence" value="ECO:0000315"/>
    <property type="project" value="MTBBASE"/>
</dbReference>
<dbReference type="GO" id="GO:0006260">
    <property type="term" value="P:DNA replication"/>
    <property type="evidence" value="ECO:0000315"/>
    <property type="project" value="MTBBASE"/>
</dbReference>
<dbReference type="CDD" id="cd01049">
    <property type="entry name" value="RNRR2"/>
    <property type="match status" value="1"/>
</dbReference>
<dbReference type="FunFam" id="1.10.620.20:FF:000005">
    <property type="entry name" value="Ribonucleoside-diphosphate reductase subunit beta"/>
    <property type="match status" value="1"/>
</dbReference>
<dbReference type="Gene3D" id="1.10.620.20">
    <property type="entry name" value="Ribonucleotide Reductase, subunit A"/>
    <property type="match status" value="1"/>
</dbReference>
<dbReference type="InterPro" id="IPR009078">
    <property type="entry name" value="Ferritin-like_SF"/>
</dbReference>
<dbReference type="InterPro" id="IPR012348">
    <property type="entry name" value="RNR-like"/>
</dbReference>
<dbReference type="InterPro" id="IPR026494">
    <property type="entry name" value="RNR_NrdF-like"/>
</dbReference>
<dbReference type="InterPro" id="IPR033909">
    <property type="entry name" value="RNR_small"/>
</dbReference>
<dbReference type="InterPro" id="IPR030475">
    <property type="entry name" value="RNR_small_AS"/>
</dbReference>
<dbReference type="InterPro" id="IPR000358">
    <property type="entry name" value="RNR_small_fam"/>
</dbReference>
<dbReference type="NCBIfam" id="NF007182">
    <property type="entry name" value="PRK09614.1-1"/>
    <property type="match status" value="1"/>
</dbReference>
<dbReference type="NCBIfam" id="NF007183">
    <property type="entry name" value="PRK09614.1-2"/>
    <property type="match status" value="1"/>
</dbReference>
<dbReference type="NCBIfam" id="NF010572">
    <property type="entry name" value="PRK13965.1"/>
    <property type="match status" value="1"/>
</dbReference>
<dbReference type="NCBIfam" id="NF010573">
    <property type="entry name" value="PRK13966.1"/>
    <property type="match status" value="1"/>
</dbReference>
<dbReference type="NCBIfam" id="TIGR04171">
    <property type="entry name" value="RNR_1b_NrdF"/>
    <property type="match status" value="1"/>
</dbReference>
<dbReference type="PANTHER" id="PTHR23409">
    <property type="entry name" value="RIBONUCLEOSIDE-DIPHOSPHATE REDUCTASE SMALL CHAIN"/>
    <property type="match status" value="1"/>
</dbReference>
<dbReference type="PANTHER" id="PTHR23409:SF18">
    <property type="entry name" value="RIBONUCLEOSIDE-DIPHOSPHATE REDUCTASE SUBUNIT M2"/>
    <property type="match status" value="1"/>
</dbReference>
<dbReference type="Pfam" id="PF00268">
    <property type="entry name" value="Ribonuc_red_sm"/>
    <property type="match status" value="1"/>
</dbReference>
<dbReference type="PIRSF" id="PIRSF000355">
    <property type="entry name" value="NrdB"/>
    <property type="match status" value="1"/>
</dbReference>
<dbReference type="SUPFAM" id="SSF47240">
    <property type="entry name" value="Ferritin-like"/>
    <property type="match status" value="1"/>
</dbReference>
<dbReference type="PROSITE" id="PS00368">
    <property type="entry name" value="RIBORED_SMALL"/>
    <property type="match status" value="1"/>
</dbReference>
<protein>
    <recommendedName>
        <fullName>Ribonucleoside-diphosphate reductase subunit beta nrdF2</fullName>
        <ecNumber>1.17.4.1</ecNumber>
    </recommendedName>
    <alternativeName>
        <fullName>Ribonucleoside-diphosphate reductase nrdF2</fullName>
    </alternativeName>
    <alternativeName>
        <fullName>Ribonucleotide reductase R2-2 small subunit</fullName>
    </alternativeName>
</protein>
<proteinExistence type="evidence at protein level"/>
<gene>
    <name type="primary">nrdF2</name>
    <name type="ordered locus">Rv3048c</name>
</gene>
<evidence type="ECO:0000255" key="1">
    <source>
        <dbReference type="PROSITE-ProRule" id="PRU10014"/>
    </source>
</evidence>
<evidence type="ECO:0000269" key="2">
    <source>
    </source>
</evidence>
<evidence type="ECO:0000269" key="3">
    <source>
    </source>
</evidence>
<evidence type="ECO:0000305" key="4"/>
<evidence type="ECO:0007829" key="5">
    <source>
        <dbReference type="PDB" id="1UZR"/>
    </source>
</evidence>
<evidence type="ECO:0007829" key="6">
    <source>
        <dbReference type="PDB" id="8J4X"/>
    </source>
</evidence>
<sequence>MTGNAKLIDRVSAINWNRLQDEKDAEVWDRLTGNFWLPEKVPVSNDIPSWGTLTAGEKQLTMRVFTGLTMLDTIQGTVGAVSLIPDALTPHEEAVLTNIAFMESVHAKSYSQIFSTLCSTAEIDDAFRWSEENRNLQRKAEIVLQYYRGDEPLKRKVASTLLESFLFYSGFYLPMYWSSRAKLTNTADMIRLIIRDEAVHGYYIGYKFQRGLALVDDVTRAELKDYTYELLFELYDNEVEYTQDLYDEVGLTEDVKKFLRYNANKALMNLGYEALFPRDETDVNPAILSALSPNADENHDFFSGSGSSYVIGKAVVTEDDDWDF</sequence>